<evidence type="ECO:0000250" key="1"/>
<evidence type="ECO:0000250" key="2">
    <source>
        <dbReference type="UniProtKB" id="P02340"/>
    </source>
</evidence>
<evidence type="ECO:0000250" key="3">
    <source>
        <dbReference type="UniProtKB" id="P04637"/>
    </source>
</evidence>
<evidence type="ECO:0000250" key="4">
    <source>
        <dbReference type="UniProtKB" id="P10361"/>
    </source>
</evidence>
<evidence type="ECO:0000256" key="5">
    <source>
        <dbReference type="SAM" id="MobiDB-lite"/>
    </source>
</evidence>
<evidence type="ECO:0000305" key="6"/>
<sequence>MEEAQSDLSIEPPLSQETFSDLWNLLPENNVLSPVLSPPMDDLLLSSEDVENWFDKGPDEALQMSAAPAPKAPTPAASTLAAPSPATSWPLSSSVPSQNTYPGVYGFRLGFLHSGTAKSVTCTYSPSLNKLFCQLAKTCPVQLWVDSTPPPGTRVRAMAIYKKSQHMTEVVRRCPHHERCSDSDGLAPPQHLIRVEGNLRAEYLDDRNTFRHSVVVPYEPPEVGSECTTIHYNYMCNSSCMGGMNRRPILTIITLEGSSGNLLGRNSFEVRVCACPGRDRRTEEENFRKRGEPCPEPPPRSTKRALPNGTSSSPQPKKKPLDGEYFTLKIRGRARFEMFQELNEALELKDAQAEKEPGESRPHPSYLKSKKGQSTSRHKKIIFKREGPDSD</sequence>
<reference key="1">
    <citation type="journal article" date="1997" name="Oncogene">
        <title>Partial characterization of the woodchuck tumor suppressor, p53, and its interaction with woodchuck hepatitis virus X antigen in hepatocarcinogenesis.</title>
        <authorList>
            <person name="Feitelson M.A."/>
            <person name="Ranganathan P.N."/>
            <person name="Clayton M.M."/>
            <person name="Zhang S.M."/>
        </authorList>
    </citation>
    <scope>NUCLEOTIDE SEQUENCE [MRNA]</scope>
</reference>
<name>P53_MARMO</name>
<gene>
    <name type="primary">TP53</name>
</gene>
<dbReference type="EMBL" id="AJ001022">
    <property type="protein sequence ID" value="CAA04478.1"/>
    <property type="molecule type" value="mRNA"/>
</dbReference>
<dbReference type="SMR" id="O36006"/>
<dbReference type="GO" id="GO:0005813">
    <property type="term" value="C:centrosome"/>
    <property type="evidence" value="ECO:0000250"/>
    <property type="project" value="UniProtKB"/>
</dbReference>
<dbReference type="GO" id="GO:0005737">
    <property type="term" value="C:cytoplasm"/>
    <property type="evidence" value="ECO:0000250"/>
    <property type="project" value="UniProtKB"/>
</dbReference>
<dbReference type="GO" id="GO:0005783">
    <property type="term" value="C:endoplasmic reticulum"/>
    <property type="evidence" value="ECO:0007669"/>
    <property type="project" value="UniProtKB-SubCell"/>
</dbReference>
<dbReference type="GO" id="GO:0005759">
    <property type="term" value="C:mitochondrial matrix"/>
    <property type="evidence" value="ECO:0007669"/>
    <property type="project" value="UniProtKB-SubCell"/>
</dbReference>
<dbReference type="GO" id="GO:0005739">
    <property type="term" value="C:mitochondrion"/>
    <property type="evidence" value="ECO:0000250"/>
    <property type="project" value="UniProtKB"/>
</dbReference>
<dbReference type="GO" id="GO:0005730">
    <property type="term" value="C:nucleolus"/>
    <property type="evidence" value="ECO:0000250"/>
    <property type="project" value="UniProtKB"/>
</dbReference>
<dbReference type="GO" id="GO:0005634">
    <property type="term" value="C:nucleus"/>
    <property type="evidence" value="ECO:0000250"/>
    <property type="project" value="UniProtKB"/>
</dbReference>
<dbReference type="GO" id="GO:0016605">
    <property type="term" value="C:PML body"/>
    <property type="evidence" value="ECO:0007669"/>
    <property type="project" value="UniProtKB-SubCell"/>
</dbReference>
<dbReference type="GO" id="GO:0036310">
    <property type="term" value="F:ATP-dependent DNA/DNA annealing activity"/>
    <property type="evidence" value="ECO:0000250"/>
    <property type="project" value="UniProtKB"/>
</dbReference>
<dbReference type="GO" id="GO:0005507">
    <property type="term" value="F:copper ion binding"/>
    <property type="evidence" value="ECO:0000250"/>
    <property type="project" value="UniProtKB"/>
</dbReference>
<dbReference type="GO" id="GO:0003677">
    <property type="term" value="F:DNA binding"/>
    <property type="evidence" value="ECO:0000250"/>
    <property type="project" value="UniProtKB"/>
</dbReference>
<dbReference type="GO" id="GO:0000981">
    <property type="term" value="F:DNA-binding transcription factor activity, RNA polymerase II-specific"/>
    <property type="evidence" value="ECO:0000250"/>
    <property type="project" value="UniProtKB"/>
</dbReference>
<dbReference type="GO" id="GO:0140693">
    <property type="term" value="F:molecular condensate scaffold activity"/>
    <property type="evidence" value="ECO:0000250"/>
    <property type="project" value="UniProtKB"/>
</dbReference>
<dbReference type="GO" id="GO:1990841">
    <property type="term" value="F:promoter-specific chromatin binding"/>
    <property type="evidence" value="ECO:0000250"/>
    <property type="project" value="UniProtKB"/>
</dbReference>
<dbReference type="GO" id="GO:0000978">
    <property type="term" value="F:RNA polymerase II cis-regulatory region sequence-specific DNA binding"/>
    <property type="evidence" value="ECO:0000250"/>
    <property type="project" value="UniProtKB"/>
</dbReference>
<dbReference type="GO" id="GO:0090398">
    <property type="term" value="P:cellular senescence"/>
    <property type="evidence" value="ECO:0000250"/>
    <property type="project" value="UniProtKB"/>
</dbReference>
<dbReference type="GO" id="GO:0048512">
    <property type="term" value="P:circadian behavior"/>
    <property type="evidence" value="ECO:0000250"/>
    <property type="project" value="UniProtKB"/>
</dbReference>
<dbReference type="GO" id="GO:0006974">
    <property type="term" value="P:DNA damage response"/>
    <property type="evidence" value="ECO:0000250"/>
    <property type="project" value="UniProtKB"/>
</dbReference>
<dbReference type="GO" id="GO:0043153">
    <property type="term" value="P:entrainment of circadian clock by photoperiod"/>
    <property type="evidence" value="ECO:0000250"/>
    <property type="project" value="UniProtKB"/>
</dbReference>
<dbReference type="GO" id="GO:0030308">
    <property type="term" value="P:negative regulation of cell growth"/>
    <property type="evidence" value="ECO:0000250"/>
    <property type="project" value="UniProtKB"/>
</dbReference>
<dbReference type="GO" id="GO:0045892">
    <property type="term" value="P:negative regulation of DNA-templated transcription"/>
    <property type="evidence" value="ECO:0000250"/>
    <property type="project" value="UniProtKB"/>
</dbReference>
<dbReference type="GO" id="GO:0006289">
    <property type="term" value="P:nucleotide-excision repair"/>
    <property type="evidence" value="ECO:0000250"/>
    <property type="project" value="UniProtKB"/>
</dbReference>
<dbReference type="GO" id="GO:0097252">
    <property type="term" value="P:oligodendrocyte apoptotic process"/>
    <property type="evidence" value="ECO:0000250"/>
    <property type="project" value="UniProtKB"/>
</dbReference>
<dbReference type="GO" id="GO:0043065">
    <property type="term" value="P:positive regulation of apoptotic process"/>
    <property type="evidence" value="ECO:0000250"/>
    <property type="project" value="UniProtKB"/>
</dbReference>
<dbReference type="GO" id="GO:2001244">
    <property type="term" value="P:positive regulation of intrinsic apoptotic signaling pathway"/>
    <property type="evidence" value="ECO:0000250"/>
    <property type="project" value="UniProtKB"/>
</dbReference>
<dbReference type="GO" id="GO:0045944">
    <property type="term" value="P:positive regulation of transcription by RNA polymerase II"/>
    <property type="evidence" value="ECO:0000250"/>
    <property type="project" value="UniProtKB"/>
</dbReference>
<dbReference type="GO" id="GO:0051262">
    <property type="term" value="P:protein tetramerization"/>
    <property type="evidence" value="ECO:0007669"/>
    <property type="project" value="InterPro"/>
</dbReference>
<dbReference type="CDD" id="cd08367">
    <property type="entry name" value="P53"/>
    <property type="match status" value="1"/>
</dbReference>
<dbReference type="FunFam" id="2.60.40.720:FF:000003">
    <property type="entry name" value="Cellular tumor antigen p53"/>
    <property type="match status" value="1"/>
</dbReference>
<dbReference type="FunFam" id="4.10.170.10:FF:000003">
    <property type="entry name" value="Cellular tumor antigen p53"/>
    <property type="match status" value="1"/>
</dbReference>
<dbReference type="Gene3D" id="2.60.40.720">
    <property type="match status" value="1"/>
</dbReference>
<dbReference type="Gene3D" id="6.10.50.20">
    <property type="match status" value="1"/>
</dbReference>
<dbReference type="Gene3D" id="4.10.170.10">
    <property type="entry name" value="p53-like tetramerisation domain"/>
    <property type="match status" value="1"/>
</dbReference>
<dbReference type="InterPro" id="IPR008967">
    <property type="entry name" value="p53-like_TF_DNA-bd_sf"/>
</dbReference>
<dbReference type="InterPro" id="IPR012346">
    <property type="entry name" value="p53/RUNT-type_TF_DNA-bd_sf"/>
</dbReference>
<dbReference type="InterPro" id="IPR011615">
    <property type="entry name" value="p53_DNA-bd"/>
</dbReference>
<dbReference type="InterPro" id="IPR036674">
    <property type="entry name" value="p53_tetramer_sf"/>
</dbReference>
<dbReference type="InterPro" id="IPR010991">
    <property type="entry name" value="p53_tetrameristn"/>
</dbReference>
<dbReference type="InterPro" id="IPR013872">
    <property type="entry name" value="p53_transactivation_domain"/>
</dbReference>
<dbReference type="InterPro" id="IPR002117">
    <property type="entry name" value="p53_tumour_suppressor"/>
</dbReference>
<dbReference type="PANTHER" id="PTHR11447">
    <property type="entry name" value="CELLULAR TUMOR ANTIGEN P53"/>
    <property type="match status" value="1"/>
</dbReference>
<dbReference type="PANTHER" id="PTHR11447:SF6">
    <property type="entry name" value="CELLULAR TUMOR ANTIGEN P53"/>
    <property type="match status" value="1"/>
</dbReference>
<dbReference type="Pfam" id="PF00870">
    <property type="entry name" value="P53"/>
    <property type="match status" value="1"/>
</dbReference>
<dbReference type="Pfam" id="PF08563">
    <property type="entry name" value="P53_TAD"/>
    <property type="match status" value="1"/>
</dbReference>
<dbReference type="Pfam" id="PF07710">
    <property type="entry name" value="P53_tetramer"/>
    <property type="match status" value="1"/>
</dbReference>
<dbReference type="PRINTS" id="PR00386">
    <property type="entry name" value="P53SUPPRESSR"/>
</dbReference>
<dbReference type="SUPFAM" id="SSF47719">
    <property type="entry name" value="p53 tetramerization domain"/>
    <property type="match status" value="1"/>
</dbReference>
<dbReference type="SUPFAM" id="SSF49417">
    <property type="entry name" value="p53-like transcription factors"/>
    <property type="match status" value="1"/>
</dbReference>
<dbReference type="PROSITE" id="PS00348">
    <property type="entry name" value="P53"/>
    <property type="match status" value="1"/>
</dbReference>
<accession>O36006</accession>
<feature type="chain" id="PRO_0000185707" description="Cellular tumor antigen p53">
    <location>
        <begin position="1"/>
        <end position="391"/>
    </location>
</feature>
<feature type="DNA-binding region" evidence="3">
    <location>
        <begin position="100"/>
        <end position="290"/>
    </location>
</feature>
<feature type="region of interest" description="Interaction with CCAR2" evidence="3">
    <location>
        <begin position="1"/>
        <end position="318"/>
    </location>
</feature>
<feature type="region of interest" description="Transcription activation (acidic)">
    <location>
        <begin position="1"/>
        <end position="44"/>
    </location>
</feature>
<feature type="region of interest" description="Interaction with WWOX" evidence="1">
    <location>
        <begin position="64"/>
        <end position="108"/>
    </location>
</feature>
<feature type="region of interest" description="Disordered" evidence="5">
    <location>
        <begin position="65"/>
        <end position="87"/>
    </location>
</feature>
<feature type="region of interest" description="Interaction with HIPK1" evidence="1">
    <location>
        <begin position="98"/>
        <end position="368"/>
    </location>
</feature>
<feature type="region of interest" description="Required for interaction with ZNF385A" evidence="1">
    <location>
        <begin position="98"/>
        <end position="298"/>
    </location>
</feature>
<feature type="region of interest" description="Required for interaction with FBXO42" evidence="1">
    <location>
        <begin position="111"/>
        <end position="234"/>
    </location>
</feature>
<feature type="region of interest" description="Interaction with AXIN1" evidence="1">
    <location>
        <begin position="114"/>
        <end position="290"/>
    </location>
</feature>
<feature type="region of interest" description="Interaction with E4F1" evidence="1">
    <location>
        <begin position="254"/>
        <end position="292"/>
    </location>
</feature>
<feature type="region of interest" description="Interaction with DNA" evidence="1">
    <location>
        <begin position="271"/>
        <end position="278"/>
    </location>
</feature>
<feature type="region of interest" description="Disordered" evidence="5">
    <location>
        <begin position="281"/>
        <end position="323"/>
    </location>
</feature>
<feature type="region of interest" description="Interaction with HIPK2" evidence="1">
    <location>
        <begin position="317"/>
        <end position="358"/>
    </location>
</feature>
<feature type="region of interest" description="Oligomerization">
    <location>
        <begin position="323"/>
        <end position="354"/>
    </location>
</feature>
<feature type="region of interest" description="Disordered" evidence="5">
    <location>
        <begin position="348"/>
        <end position="391"/>
    </location>
</feature>
<feature type="region of interest" description="Interaction with USP7" evidence="1">
    <location>
        <begin position="357"/>
        <end position="361"/>
    </location>
</feature>
<feature type="region of interest" description="Basic (repression of DNA-binding)">
    <location>
        <begin position="366"/>
        <end position="385"/>
    </location>
</feature>
<feature type="short sequence motif" description="Bipartite nuclear localization signal" evidence="1">
    <location>
        <begin position="303"/>
        <end position="319"/>
    </location>
</feature>
<feature type="short sequence motif" description="Nuclear export signal" evidence="1">
    <location>
        <begin position="337"/>
        <end position="348"/>
    </location>
</feature>
<feature type="short sequence motif" description="[KR]-[STA]-K motif">
    <location>
        <begin position="368"/>
        <end position="370"/>
    </location>
</feature>
<feature type="compositionally biased region" description="Basic and acidic residues" evidence="5">
    <location>
        <begin position="281"/>
        <end position="293"/>
    </location>
</feature>
<feature type="compositionally biased region" description="Basic and acidic residues" evidence="5">
    <location>
        <begin position="348"/>
        <end position="362"/>
    </location>
</feature>
<feature type="compositionally biased region" description="Basic residues" evidence="5">
    <location>
        <begin position="368"/>
        <end position="382"/>
    </location>
</feature>
<feature type="binding site" evidence="3">
    <location>
        <position position="174"/>
    </location>
    <ligand>
        <name>Zn(2+)</name>
        <dbReference type="ChEBI" id="CHEBI:29105"/>
    </ligand>
</feature>
<feature type="binding site" evidence="3">
    <location>
        <position position="177"/>
    </location>
    <ligand>
        <name>Zn(2+)</name>
        <dbReference type="ChEBI" id="CHEBI:29105"/>
    </ligand>
</feature>
<feature type="binding site" evidence="3">
    <location>
        <position position="236"/>
    </location>
    <ligand>
        <name>Zn(2+)</name>
        <dbReference type="ChEBI" id="CHEBI:29105"/>
    </ligand>
</feature>
<feature type="binding site" evidence="3">
    <location>
        <position position="240"/>
    </location>
    <ligand>
        <name>Zn(2+)</name>
        <dbReference type="ChEBI" id="CHEBI:29105"/>
    </ligand>
</feature>
<feature type="site" description="Interaction with DNA" evidence="3">
    <location>
        <position position="118"/>
    </location>
</feature>
<feature type="modified residue" description="Phosphoserine; by HIPK4" evidence="3">
    <location>
        <position position="9"/>
    </location>
</feature>
<feature type="modified residue" description="Phosphoserine; by CDK5, PRPK, AMPK, NUAK1 and ATM" evidence="3">
    <location>
        <position position="15"/>
    </location>
</feature>
<feature type="modified residue" description="Phosphothreonine; by CK1, VRK1 and VRK2" evidence="3">
    <location>
        <position position="18"/>
    </location>
</feature>
<feature type="modified residue" description="Phosphoserine; by CHEK2, CK1 and PLK3" evidence="3">
    <location>
        <position position="20"/>
    </location>
</feature>
<feature type="modified residue" description="Phosphoserine; by CDK5 and CDK7" evidence="3">
    <location>
        <position position="33"/>
    </location>
</feature>
<feature type="modified residue" description="Phosphoserine; by MAPKAPK5" evidence="3">
    <location>
        <position position="37"/>
    </location>
</feature>
<feature type="modified residue" description="Phosphoserine; by CDK5, DYRK2, HIPK2 and PKC/PRKCG" evidence="3">
    <location>
        <position position="46"/>
    </location>
</feature>
<feature type="modified residue" description="N6-acetyllysine" evidence="3">
    <location>
        <position position="118"/>
    </location>
</feature>
<feature type="modified residue" description="N6-lactoyllysine" evidence="3">
    <location>
        <position position="118"/>
    </location>
</feature>
<feature type="modified residue" description="N6-lactoyllysine" evidence="3">
    <location>
        <position position="137"/>
    </location>
</feature>
<feature type="modified residue" description="Phosphoserine; by AURKB" evidence="3">
    <location>
        <position position="181"/>
    </location>
</feature>
<feature type="modified residue" description="Phosphoserine; by AURKB" evidence="3">
    <location>
        <position position="267"/>
    </location>
</feature>
<feature type="modified residue" description="Phosphothreonine; by AURKB" evidence="3">
    <location>
        <position position="282"/>
    </location>
</feature>
<feature type="modified residue" description="N6-acetyllysine" evidence="3">
    <location>
        <position position="303"/>
    </location>
</feature>
<feature type="modified residue" description="Phosphoserine; by AURKA, CDK1 and CDK2" evidence="3">
    <location>
        <position position="313"/>
    </location>
</feature>
<feature type="modified residue" description="N6-acetyllysine" evidence="2">
    <location>
        <position position="319"/>
    </location>
</feature>
<feature type="modified residue" description="Omega-N-methylarginine" evidence="3">
    <location>
        <position position="331"/>
    </location>
</feature>
<feature type="modified residue" description="Symmetric dimethylarginine" evidence="3">
    <location>
        <position position="333"/>
    </location>
</feature>
<feature type="modified residue" description="Symmetric dimethylarginine" evidence="3">
    <location>
        <position position="335"/>
    </location>
</feature>
<feature type="modified residue" description="N6,N6-dimethyllysine; alternate" evidence="3">
    <location>
        <position position="368"/>
    </location>
</feature>
<feature type="modified residue" description="N6-methyllysine; by SMYD2; alternate" evidence="3">
    <location>
        <position position="368"/>
    </location>
</feature>
<feature type="modified residue" description="N6-methyllysine; by SETD7" evidence="3">
    <location>
        <position position="370"/>
    </location>
</feature>
<feature type="modified residue" description="N6,N6-dimethyllysine; by EHMT1 and EHMT2; alternate" evidence="3">
    <location>
        <position position="371"/>
    </location>
</feature>
<feature type="modified residue" description="N6-acetyllysine; alternate" evidence="3">
    <location>
        <position position="371"/>
    </location>
</feature>
<feature type="modified residue" description="N6-acetyllysine" evidence="3">
    <location>
        <position position="379"/>
    </location>
</feature>
<feature type="modified residue" description="N6,N6-dimethyllysine; alternate" evidence="3">
    <location>
        <position position="380"/>
    </location>
</feature>
<feature type="modified residue" description="N6-acetyllysine; alternate" evidence="3">
    <location>
        <position position="380"/>
    </location>
</feature>
<feature type="modified residue" description="N6-methyllysine; by KMT5A; alternate" evidence="3">
    <location>
        <position position="380"/>
    </location>
</feature>
<feature type="modified residue" description="Phosphoserine; by CK2, CDK2 and NUAK1" evidence="3">
    <location>
        <position position="390"/>
    </location>
</feature>
<feature type="cross-link" description="Glycyl lysine isopeptide (Lys-Gly) (interchain with G-Cter in ubiquitin)" evidence="3">
    <location>
        <position position="289"/>
    </location>
</feature>
<feature type="cross-link" description="Glycyl lysine isopeptide (Lys-Gly) (interchain with G-Cter in ubiquitin)" evidence="3">
    <location>
        <position position="349"/>
    </location>
</feature>
<feature type="cross-link" description="Glycyl lysine isopeptide (Lys-Gly) (interchain with G-Cter in ubiquitin)" evidence="3">
    <location>
        <position position="355"/>
    </location>
</feature>
<feature type="cross-link" description="Glycyl lysine isopeptide (Lys-Gly) (interchain with G-Cter in SUMO)" evidence="1">
    <location>
        <position position="384"/>
    </location>
</feature>
<organism>
    <name type="scientific">Marmota monax</name>
    <name type="common">Woodchuck</name>
    <dbReference type="NCBI Taxonomy" id="9995"/>
    <lineage>
        <taxon>Eukaryota</taxon>
        <taxon>Metazoa</taxon>
        <taxon>Chordata</taxon>
        <taxon>Craniata</taxon>
        <taxon>Vertebrata</taxon>
        <taxon>Euteleostomi</taxon>
        <taxon>Mammalia</taxon>
        <taxon>Eutheria</taxon>
        <taxon>Euarchontoglires</taxon>
        <taxon>Glires</taxon>
        <taxon>Rodentia</taxon>
        <taxon>Sciuromorpha</taxon>
        <taxon>Sciuridae</taxon>
        <taxon>Xerinae</taxon>
        <taxon>Marmotini</taxon>
        <taxon>Marmota</taxon>
    </lineage>
</organism>
<proteinExistence type="evidence at transcript level"/>
<keyword id="KW-0007">Acetylation</keyword>
<keyword id="KW-0010">Activator</keyword>
<keyword id="KW-0053">Apoptosis</keyword>
<keyword id="KW-0090">Biological rhythms</keyword>
<keyword id="KW-0131">Cell cycle</keyword>
<keyword id="KW-0963">Cytoplasm</keyword>
<keyword id="KW-0238">DNA-binding</keyword>
<keyword id="KW-0256">Endoplasmic reticulum</keyword>
<keyword id="KW-1017">Isopeptide bond</keyword>
<keyword id="KW-0479">Metal-binding</keyword>
<keyword id="KW-0488">Methylation</keyword>
<keyword id="KW-0496">Mitochondrion</keyword>
<keyword id="KW-1210">Necrosis</keyword>
<keyword id="KW-0539">Nucleus</keyword>
<keyword id="KW-0597">Phosphoprotein</keyword>
<keyword id="KW-0678">Repressor</keyword>
<keyword id="KW-0804">Transcription</keyword>
<keyword id="KW-0805">Transcription regulation</keyword>
<keyword id="KW-0043">Tumor suppressor</keyword>
<keyword id="KW-0832">Ubl conjugation</keyword>
<keyword id="KW-0862">Zinc</keyword>
<protein>
    <recommendedName>
        <fullName>Cellular tumor antigen p53</fullName>
    </recommendedName>
    <alternativeName>
        <fullName>Tumor suppressor p53</fullName>
    </alternativeName>
</protein>
<comment type="function">
    <text evidence="2 3">Multifunctional transcription factor that induces cell cycle arrest, DNA repair or apoptosis upon binding to its target DNA sequence. Acts as a tumor suppressor in many tumor types; induces growth arrest or apoptosis depending on the physiological circumstances and cell type. Negatively regulates cell division by controlling expression of a set of genes required for this process. One of the activated genes is an inhibitor of cyclin-dependent kinases. Apoptosis induction seems to be mediated either by stimulation of BAX and FAS antigen expression, or by repression of Bcl-2 expression. Its pro-apoptotic activity is activated via its interaction with PPP1R13B/ASPP1 or TP53BP2/ASPP2 (By similarity). However, this activity is inhibited when the interaction with PPP1R13B/ASPP1 or TP53BP2/ASPP2 is displaced by PPP1R13L/iASPP (By similarity). In cooperation with mitochondrial PPIF is involved in activating oxidative stress-induced necrosis; the function is largely independent of transcription. Prevents CDK7 kinase activity when associated to CAK complex in response to DNA damage, thus stopping cell cycle progression. Induces the transcription of long intergenic non-coding RNA p21 (lincRNA-p21) and lincRNA-Mkln1. LincRNA-p21 participates in TP53-dependent transcriptional repression leading to apoptosis and seems to have an effect on cell-cycle regulation. Regulates the circadian clock by repressing CLOCK-BMAL1-mediated transcriptional activation of PER2.</text>
</comment>
<comment type="cofactor">
    <cofactor evidence="1">
        <name>Zn(2+)</name>
        <dbReference type="ChEBI" id="CHEBI:29105"/>
    </cofactor>
    <text evidence="1">Binds 1 zinc ion per subunit.</text>
</comment>
<comment type="subunit">
    <text evidence="2 3 4">Forms homodimers and homotetramers (By similarity). Binds DNA as a homotetramer. Interacts with AXIN1. Probably part of a complex consisting of TP53, HIPK2 and AXIN1. Interacts with histone acetyltransferases EP300 and methyltransferases HRMT1L2 and CARM1, and recruits them to promoters. Interacts (via C-terminus) with TAF1; when TAF1 is part of the TFIID complex. Interacts with ING4; this interaction may be indirect. Found in a complex with CABLES1 and TP73. Interacts with HIPK1, HIPK2, and TP53INP1. Interacts with WWOX. Interacts with USP7 and SYVN1. Interacts with HSP90AB1. Interacts with CHD8; leading to recruit histone H1 and prevent transactivation activity. Interacts with ARMC10, BANP, CDKN2AIP, NUAK1, STK11/LKB1, UHRF2 and E4F. Interacts with YWHAZ; the interaction enhances TP53 transcriptional activity. Phosphorylation of YWHAZ on 'Ser-58' inhibits this interaction. Interacts (via DNA-binding domain) with MAML1 (via N-terminus). Interacts with MKRN1. Interacts with PML (via C-terminus). Interacts with MDM2; leading to ubiquitination and proteasomal degradation of TP53. Directly interacts with FBXO42; leading to ubiquitination and degradation of TP53. Interacts (phosphorylated at Ser-15 by ATM) with the phosphatase PP2A-PPP2R5C holoenzyme; regulates stress-induced TP53-dependent inhibition of cell proliferation. Interacts with PPP2R2A. Interacts with AURKA, DAXX, BRD7 and TRIM24. Interacts (when monomethylated at Lys-380) with L3MBTL1. Interacts with GRK5. Binds to the CAK complex (CDK7, cyclin H and MAT1) in response to DNA damage. Interacts with CDK5 in neurons. Interacts with AURKB, SETD2, UHRF2 and NOC2L. Interacts (via N-terminus) with PTK2/FAK1; this promotes ubiquitination by MDM2. Interacts with PTK2B/PYK2; this promotes ubiquitination by MDM2. Interacts with PRKCG. Interacts with PPIF; the association implicates preferentially tetrameric TP53, is induced by oxidative stress and is impaired by cyclosporin A (CsA). Interacts with SNAI1; the interaction induces SNAI1 degradation via MDM2-mediated ubiquitination and inhibits SNAI1-induced cell invasion. Interacts with UBC9. Interacts with ZNF385B; the interaction is direct. Interacts (via DNA-binding domain) with ZNF385A; the interaction is direct and enhances p53/TP53 transactivation functions on cell-cycle arrest target genes, resulting in growth arrest (By similarity). Interacts with ANKRD2. Interacts with RFFL and RNF34; involved in p53/TP53 ubiquitination. Interacts with MTA1 and COP1. Interacts with CCAR2 (via N-terminus). Interacts with MORC3. Interacts (via C-terminus) with POU4F2 (via C-terminus). Interacts (via oligomerization region) with NOP53; the interaction is direct and may prevent the MDM2-mediated proteasomal degradation of TP53. Interacts with AFG1L; mediates mitochondrial translocation of TP53. Interacts with UBD (By similarity). Interacts with TAF6 (By similarity). Interacts with C10orf90/FATS; the interaction inhibits binding of TP53 and MDM2 (By similarity). Interacts with NUPR1; interaction is stress-dependent. Forms a complex with EP300 and NUPR1; this complex binds CDKN1A promoter leading to transcriptional induction of CDKN1A (By similarity). Interacts with PRMT5 in response to DNA damage; the interaction is TTC5/STRAP dependent (By similarity). Interacts with PPP1R13L (via SH3 domain and ANK repeats); the interaction inhibits pro-apoptotic activity of p53/TP53 (By similarity). Interacts with PPP1R13B/ASPP1 and TP53BP2/ASPP2; the interactions promotes pro-apoptotic activity (By similarity). Interacts with S100A4; this interaction promotes TP53 degradation (By similarity). Interacts with TTC5/STRAP; the interaction may result in increased mitochondrial-dependent apoptosis (By similarity). Interacts with NQO1; this interaction is NADH-dependent, stabilizes TP53 in response to oxidative stress and protects it from ubiquitin-independent degradation by the 20S proteasome (By similarity). Interacts with DAZAP2 at TP53 target gene promoters; the interaction is triggered by DNA damage and leads to modulation of the expression of a subset of TP53 target genes, reducing DNA damage-induced cell death by limiting the expression of cell death-mediating TP53 target genes (By similarity). Interacts (via N-terminus) with ZNF768 (via zinc-finger domains); interaction might be facilitated by TP53 oligomerization state (By similarity). Forms a ternary complex with ALDOB and G6PD; this interaction is direct. ALDOB stabilizes the complex inhibiting G6PD activity and keeping oxidative pentose phosphate metabolism in check. Interacts with MORN3; the interactions mediate post-transcriptional modifications of TP53 by MDM2 and SIRT1 (By similarity). Interacts with HSPA9/MOT-2; the interaction promotes the degradation of TP53 (By similarity). Interacts with FBXO22; this interaction promotes TP53 proteasomal degradation (By similarity).</text>
</comment>
<comment type="subcellular location">
    <subcellularLocation>
        <location evidence="3">Cytoplasm</location>
    </subcellularLocation>
    <subcellularLocation>
        <location evidence="3">Nucleus</location>
    </subcellularLocation>
    <subcellularLocation>
        <location evidence="3">Nucleus</location>
        <location evidence="3">PML body</location>
    </subcellularLocation>
    <subcellularLocation>
        <location evidence="3">Endoplasmic reticulum</location>
    </subcellularLocation>
    <subcellularLocation>
        <location evidence="3">Mitochondrion matrix</location>
    </subcellularLocation>
    <text evidence="3">Interaction with BANP promotes nuclear localization. Recruited into PML bodies together with CHEK2. Translocates to mitochondria upon oxidative stress. Translocates to mitochondria in response to mitomycin C treatment (By similarity). Competitive inhibition of TP53 interaction with HSPA9/MOT-2 by UBXN2A results in increased protein abundance and subsequent translocation of TP53 to the nucleus (By similarity).</text>
</comment>
<comment type="domain">
    <text evidence="3">The N-terminal and C-terminal disordered regions undergo liquid-liquid phase separation (LLPS) following homotetramerization and activation. Post-translational modifications, such as phosphorylation or lactylation affect the ability to undergo LLPS.</text>
</comment>
<comment type="domain">
    <text evidence="3">The nuclear export signal acts as a transcriptional repression domain. The TADI and TADII motifs (residues 17 to 25 and 48 to 56) correspond both to 9aaTAD motifs which are transactivation domains present in a large number of yeast and animal transcription factors.</text>
</comment>
<comment type="PTM">
    <text evidence="1">Phosphorylation on Ser residues mediates transcriptional activation. Phosphorylation at Ser-9 by HIPK4 increases repression activity on BIRC5 promoter (By similarity). Phosphorylated on Thr-18 by VRK1, which may prevent the interaction with MDM2. Phosphorylated on Ser-20 by CHEK2 in response to DNA damage, which prevents ubiquitination by MDM2. Phosphorylated on Ser-20 by PLK3 in response to reactive oxygen species (ROS), promoting p53/TP53-mediated apoptosis. Phosphorylated on Ser-33 by CDK7 in a CAK complex in response to DNA damage. Phosphorylated by HIPK1. Phosphorylated on Ser-46 by HIPK2 upon UV irradiation. Phosphorylation on Ser-46 is required for acetylation by CREBBP. Phosphorylated by CK2 following UV but not gamma irradiation. Stabilized by CDK5-mediated phosphorylation in response to genotoxic and oxidative stresses at Ser-15, Ser-33 and Ser-46, leading to accumulation of p53, particularly in the nucleus, thus inducing the transactivation of p53/TP53 target genes. Phosphorylated by DYRK2 at Ser-46 in response to genotoxic stress. Phosphorylated at Ser-313 and Ser-390 by CDK2 in response to DNA-damage (By similarity). Phosphorylation at Ser-390 regulates its ability to undergo liquid-liquid phase separation by increasing fluidity of TP53/p53 condensates (By similarity).</text>
</comment>
<comment type="PTM">
    <text evidence="3">Monomethylated at Lys-370 by SETD7, leading to stabilization and increased transcriptional activation. Monomethylated at Lys-368 by SMYD2, leading to decreased DNA-binding activity and subsequent transcriptional regulation activity. Lys-370 monomethylation prevents interaction with SMYD2 and subsequent monomethylation at Lys-368. Dimethylated at Lys-371 by EHMT1 and EHMT2. Monomethylated at Lys-380 by KMT5A, promoting interaction with L3MBTL1 and leading to repress transcriptional activity. Demethylation of dimethylated Lys-368 by KDM1A prevents interaction with TP53BP1 and represses TP53-mediated transcriptional activation (By similarity). Monomethylated at Arg-331 and dimethylated at Arg-333 and Arg-335 by PRMT5; methylation is increased after DNA damage and might possibly affect TP53 target gene specificity (By similarity).</text>
</comment>
<comment type="PTM">
    <text evidence="1">Sumoylated with SUMO1. Sumoylated at Lys-384 by UBC9 (By similarity).</text>
</comment>
<comment type="PTM">
    <text evidence="2 3">Ubiquitinated by MDM2 and SYVN1, which leads to proteasomal degradation. Ubiquitinated by RFWD3, which works in cooperation with MDM2 and may catalyze the formation of short polyubiquitin chains on p53/TP53 that are not targeted to the proteasome. Ubiquitinated by MKRN1, which leads to proteasomal degradation. Deubiquitinated by USP10, leading to stabilize it. Ubiquitinated by TRIM24, RFFL, RNF34 and RNF125, which leads to proteasomal degradation. Ubiquitination by TOPORS induces degradation. Deubiquitination by USP7, leading to stabilize it. Ubiquitinated by COP1, which leads to proteasomal degradation (By similarity). Ubiquitination and subsequent proteasomal degradation is negatively regulated by CCAR2 (By similarity). Polyubiquitinated by C10orf90/FATS, polyubiquitination is 'Lys-48'-linkage independent and non-proteolytic, leading to TP53 stabilization (By similarity). Deubiquitinated by USP3, leading to stabilization (By similarity). Ubiquitinated by MSL2, promoting its cytoplasmic localization (By similarity). Also ubiquitinated by the SCF(FBXO22)-KDMA4A complex; leading to proteasomal degradation (By similarity).</text>
</comment>
<comment type="PTM">
    <text evidence="3">Acetylation of Lys-380 by CREBBP enhances transcriptional activity. Acetylation of Lys-380 by EP300. Deacetylation of Lys-380 by SIRT1 impairs its ability to induce proapoptotic program and modulate cell senescence. Deacetylation by SIRT2 impairs its ability to induce transcription activation in a AKT-dependent manner. Acetylation at Lys-379 increases stability. Deacetylation at Lys-379 by SIRT6 decreases its stability, thereby regulating cell senescence. Acetylated at Lys-118 by KAT5, KAT6A and KAT8; regulating its ability to induce proapoptotic program.</text>
</comment>
<comment type="PTM">
    <text evidence="3">Lactylation by AARS1 prevents ability to undergo liquid-liquid phase separation (LLPS), thereby inhibiting transcription factor activity.</text>
</comment>
<comment type="disease">
    <text>p53 is found in increased amounts in a wide variety of transformed cells. p53 is frequently mutated or inactivated in many types of cancer.</text>
</comment>
<comment type="similarity">
    <text evidence="6">Belongs to the p53 family.</text>
</comment>